<comment type="function">
    <text evidence="1">Histone-like DNA-binding protein which is capable of wrapping DNA to stabilize it, and thus to prevent its denaturation under extreme environmental conditions.</text>
</comment>
<comment type="similarity">
    <text evidence="3">Belongs to the bacterial histone-like protein family.</text>
</comment>
<name>DBH_XYLFT</name>
<evidence type="ECO:0000250" key="1"/>
<evidence type="ECO:0000256" key="2">
    <source>
        <dbReference type="SAM" id="MobiDB-lite"/>
    </source>
</evidence>
<evidence type="ECO:0000305" key="3"/>
<protein>
    <recommendedName>
        <fullName>DNA-binding protein HU</fullName>
    </recommendedName>
</protein>
<dbReference type="EMBL" id="AE009442">
    <property type="protein sequence ID" value="AAO28352.1"/>
    <property type="molecule type" value="Genomic_DNA"/>
</dbReference>
<dbReference type="RefSeq" id="WP_004090176.1">
    <property type="nucleotide sequence ID" value="NC_004556.1"/>
</dbReference>
<dbReference type="SMR" id="Q87E48"/>
<dbReference type="KEGG" id="xft:PD_0475"/>
<dbReference type="HOGENOM" id="CLU_105066_3_1_6"/>
<dbReference type="Proteomes" id="UP000002516">
    <property type="component" value="Chromosome"/>
</dbReference>
<dbReference type="GO" id="GO:0005829">
    <property type="term" value="C:cytosol"/>
    <property type="evidence" value="ECO:0007669"/>
    <property type="project" value="TreeGrafter"/>
</dbReference>
<dbReference type="GO" id="GO:0003677">
    <property type="term" value="F:DNA binding"/>
    <property type="evidence" value="ECO:0007669"/>
    <property type="project" value="UniProtKB-KW"/>
</dbReference>
<dbReference type="GO" id="GO:0030527">
    <property type="term" value="F:structural constituent of chromatin"/>
    <property type="evidence" value="ECO:0007669"/>
    <property type="project" value="InterPro"/>
</dbReference>
<dbReference type="GO" id="GO:0030261">
    <property type="term" value="P:chromosome condensation"/>
    <property type="evidence" value="ECO:0007669"/>
    <property type="project" value="UniProtKB-KW"/>
</dbReference>
<dbReference type="CDD" id="cd13831">
    <property type="entry name" value="HU"/>
    <property type="match status" value="1"/>
</dbReference>
<dbReference type="FunFam" id="4.10.520.10:FF:000001">
    <property type="entry name" value="DNA-binding protein HU"/>
    <property type="match status" value="1"/>
</dbReference>
<dbReference type="Gene3D" id="4.10.520.10">
    <property type="entry name" value="IHF-like DNA-binding proteins"/>
    <property type="match status" value="1"/>
</dbReference>
<dbReference type="InterPro" id="IPR000119">
    <property type="entry name" value="Hist_DNA-bd"/>
</dbReference>
<dbReference type="InterPro" id="IPR020816">
    <property type="entry name" value="Histone-like_DNA-bd_CS"/>
</dbReference>
<dbReference type="InterPro" id="IPR010992">
    <property type="entry name" value="IHF-like_DNA-bd_dom_sf"/>
</dbReference>
<dbReference type="PANTHER" id="PTHR33175">
    <property type="entry name" value="DNA-BINDING PROTEIN HU"/>
    <property type="match status" value="1"/>
</dbReference>
<dbReference type="PANTHER" id="PTHR33175:SF3">
    <property type="entry name" value="DNA-BINDING PROTEIN HU-BETA"/>
    <property type="match status" value="1"/>
</dbReference>
<dbReference type="Pfam" id="PF00216">
    <property type="entry name" value="Bac_DNA_binding"/>
    <property type="match status" value="1"/>
</dbReference>
<dbReference type="PRINTS" id="PR01727">
    <property type="entry name" value="DNABINDINGHU"/>
</dbReference>
<dbReference type="SMART" id="SM00411">
    <property type="entry name" value="BHL"/>
    <property type="match status" value="1"/>
</dbReference>
<dbReference type="SUPFAM" id="SSF47729">
    <property type="entry name" value="IHF-like DNA-binding proteins"/>
    <property type="match status" value="1"/>
</dbReference>
<dbReference type="PROSITE" id="PS00045">
    <property type="entry name" value="HISTONE_LIKE"/>
    <property type="match status" value="1"/>
</dbReference>
<gene>
    <name type="primary">hup</name>
    <name type="ordered locus">PD_0475</name>
</gene>
<feature type="chain" id="PRO_0000104997" description="DNA-binding protein HU">
    <location>
        <begin position="1"/>
        <end position="94"/>
    </location>
</feature>
<feature type="region of interest" description="Disordered" evidence="2">
    <location>
        <begin position="55"/>
        <end position="94"/>
    </location>
</feature>
<feature type="compositionally biased region" description="Basic and acidic residues" evidence="2">
    <location>
        <begin position="84"/>
        <end position="94"/>
    </location>
</feature>
<sequence>MNKTELIDGVAAAANLSKVEAGRAIDAVVNEITEALKEGDSVTLVGFGTFQVRQRAERPGRNPKTGEPIMIAASNNPSFKPGKALKDAVKSSAG</sequence>
<keyword id="KW-0226">DNA condensation</keyword>
<keyword id="KW-0238">DNA-binding</keyword>
<keyword id="KW-1185">Reference proteome</keyword>
<proteinExistence type="inferred from homology"/>
<organism>
    <name type="scientific">Xylella fastidiosa (strain Temecula1 / ATCC 700964)</name>
    <dbReference type="NCBI Taxonomy" id="183190"/>
    <lineage>
        <taxon>Bacteria</taxon>
        <taxon>Pseudomonadati</taxon>
        <taxon>Pseudomonadota</taxon>
        <taxon>Gammaproteobacteria</taxon>
        <taxon>Lysobacterales</taxon>
        <taxon>Lysobacteraceae</taxon>
        <taxon>Xylella</taxon>
    </lineage>
</organism>
<accession>Q87E48</accession>
<reference key="1">
    <citation type="journal article" date="2003" name="J. Bacteriol.">
        <title>Comparative analyses of the complete genome sequences of Pierce's disease and citrus variegated chlorosis strains of Xylella fastidiosa.</title>
        <authorList>
            <person name="Van Sluys M.A."/>
            <person name="de Oliveira M.C."/>
            <person name="Monteiro-Vitorello C.B."/>
            <person name="Miyaki C.Y."/>
            <person name="Furlan L.R."/>
            <person name="Camargo L.E.A."/>
            <person name="da Silva A.C.R."/>
            <person name="Moon D.H."/>
            <person name="Takita M.A."/>
            <person name="Lemos E.G.M."/>
            <person name="Machado M.A."/>
            <person name="Ferro M.I.T."/>
            <person name="da Silva F.R."/>
            <person name="Goldman M.H.S."/>
            <person name="Goldman G.H."/>
            <person name="Lemos M.V.F."/>
            <person name="El-Dorry H."/>
            <person name="Tsai S.M."/>
            <person name="Carrer H."/>
            <person name="Carraro D.M."/>
            <person name="de Oliveira R.C."/>
            <person name="Nunes L.R."/>
            <person name="Siqueira W.J."/>
            <person name="Coutinho L.L."/>
            <person name="Kimura E.T."/>
            <person name="Ferro E.S."/>
            <person name="Harakava R."/>
            <person name="Kuramae E.E."/>
            <person name="Marino C.L."/>
            <person name="Giglioti E."/>
            <person name="Abreu I.L."/>
            <person name="Alves L.M.C."/>
            <person name="do Amaral A.M."/>
            <person name="Baia G.S."/>
            <person name="Blanco S.R."/>
            <person name="Brito M.S."/>
            <person name="Cannavan F.S."/>
            <person name="Celestino A.V."/>
            <person name="da Cunha A.F."/>
            <person name="Fenille R.C."/>
            <person name="Ferro J.A."/>
            <person name="Formighieri E.F."/>
            <person name="Kishi L.T."/>
            <person name="Leoni S.G."/>
            <person name="Oliveira A.R."/>
            <person name="Rosa V.E. Jr."/>
            <person name="Sassaki F.T."/>
            <person name="Sena J.A.D."/>
            <person name="de Souza A.A."/>
            <person name="Truffi D."/>
            <person name="Tsukumo F."/>
            <person name="Yanai G.M."/>
            <person name="Zaros L.G."/>
            <person name="Civerolo E.L."/>
            <person name="Simpson A.J.G."/>
            <person name="Almeida N.F. Jr."/>
            <person name="Setubal J.C."/>
            <person name="Kitajima J.P."/>
        </authorList>
    </citation>
    <scope>NUCLEOTIDE SEQUENCE [LARGE SCALE GENOMIC DNA]</scope>
    <source>
        <strain>Temecula1 / ATCC 700964</strain>
    </source>
</reference>